<feature type="chain" id="PRO_1000124519" description="Transcriptional repressor NrdR">
    <location>
        <begin position="1"/>
        <end position="147"/>
    </location>
</feature>
<feature type="domain" description="ATP-cone" evidence="1">
    <location>
        <begin position="49"/>
        <end position="139"/>
    </location>
</feature>
<feature type="zinc finger region" evidence="1">
    <location>
        <begin position="3"/>
        <end position="34"/>
    </location>
</feature>
<proteinExistence type="inferred from homology"/>
<name>NRDR_LEPCP</name>
<organism>
    <name type="scientific">Leptothrix cholodnii (strain ATCC 51168 / LMG 8142 / SP-6)</name>
    <name type="common">Leptothrix discophora (strain SP-6)</name>
    <dbReference type="NCBI Taxonomy" id="395495"/>
    <lineage>
        <taxon>Bacteria</taxon>
        <taxon>Pseudomonadati</taxon>
        <taxon>Pseudomonadota</taxon>
        <taxon>Betaproteobacteria</taxon>
        <taxon>Burkholderiales</taxon>
        <taxon>Sphaerotilaceae</taxon>
        <taxon>Leptothrix</taxon>
    </lineage>
</organism>
<evidence type="ECO:0000255" key="1">
    <source>
        <dbReference type="HAMAP-Rule" id="MF_00440"/>
    </source>
</evidence>
<protein>
    <recommendedName>
        <fullName evidence="1">Transcriptional repressor NrdR</fullName>
    </recommendedName>
</protein>
<accession>B1XYE8</accession>
<keyword id="KW-0067">ATP-binding</keyword>
<keyword id="KW-0238">DNA-binding</keyword>
<keyword id="KW-0479">Metal-binding</keyword>
<keyword id="KW-0547">Nucleotide-binding</keyword>
<keyword id="KW-1185">Reference proteome</keyword>
<keyword id="KW-0678">Repressor</keyword>
<keyword id="KW-0804">Transcription</keyword>
<keyword id="KW-0805">Transcription regulation</keyword>
<keyword id="KW-0862">Zinc</keyword>
<keyword id="KW-0863">Zinc-finger</keyword>
<reference key="1">
    <citation type="submission" date="2008-03" db="EMBL/GenBank/DDBJ databases">
        <title>Complete sequence of Leptothrix cholodnii SP-6.</title>
        <authorList>
            <consortium name="US DOE Joint Genome Institute"/>
            <person name="Copeland A."/>
            <person name="Lucas S."/>
            <person name="Lapidus A."/>
            <person name="Glavina del Rio T."/>
            <person name="Dalin E."/>
            <person name="Tice H."/>
            <person name="Bruce D."/>
            <person name="Goodwin L."/>
            <person name="Pitluck S."/>
            <person name="Chertkov O."/>
            <person name="Brettin T."/>
            <person name="Detter J.C."/>
            <person name="Han C."/>
            <person name="Kuske C.R."/>
            <person name="Schmutz J."/>
            <person name="Larimer F."/>
            <person name="Land M."/>
            <person name="Hauser L."/>
            <person name="Kyrpides N."/>
            <person name="Lykidis A."/>
            <person name="Emerson D."/>
            <person name="Richardson P."/>
        </authorList>
    </citation>
    <scope>NUCLEOTIDE SEQUENCE [LARGE SCALE GENOMIC DNA]</scope>
    <source>
        <strain>ATCC 51168 / LMG 8142 / SP-6</strain>
    </source>
</reference>
<gene>
    <name evidence="1" type="primary">nrdR</name>
    <name type="ordered locus">Lcho_2928</name>
</gene>
<sequence>MRCPYCGNVETTVVETRESDEGDAVRRRRRCSACDKRFTTYERAELAMPAVVKKNGDRREFDREKLRASMTLALRKRNVSVDLIDAAIARIEDKVFTSGASEMSTSRIGEMVMRELKRLDKVAYVRFASVYREFEDIDAFSKLIQEI</sequence>
<comment type="function">
    <text evidence="1">Negatively regulates transcription of bacterial ribonucleotide reductase nrd genes and operons by binding to NrdR-boxes.</text>
</comment>
<comment type="cofactor">
    <cofactor evidence="1">
        <name>Zn(2+)</name>
        <dbReference type="ChEBI" id="CHEBI:29105"/>
    </cofactor>
    <text evidence="1">Binds 1 zinc ion.</text>
</comment>
<comment type="similarity">
    <text evidence="1">Belongs to the NrdR family.</text>
</comment>
<dbReference type="EMBL" id="CP001013">
    <property type="protein sequence ID" value="ACB35193.1"/>
    <property type="molecule type" value="Genomic_DNA"/>
</dbReference>
<dbReference type="RefSeq" id="WP_012347947.1">
    <property type="nucleotide sequence ID" value="NC_010524.1"/>
</dbReference>
<dbReference type="SMR" id="B1XYE8"/>
<dbReference type="STRING" id="395495.Lcho_2928"/>
<dbReference type="KEGG" id="lch:Lcho_2928"/>
<dbReference type="eggNOG" id="COG1327">
    <property type="taxonomic scope" value="Bacteria"/>
</dbReference>
<dbReference type="HOGENOM" id="CLU_108412_0_1_4"/>
<dbReference type="OrthoDB" id="9807461at2"/>
<dbReference type="Proteomes" id="UP000001693">
    <property type="component" value="Chromosome"/>
</dbReference>
<dbReference type="GO" id="GO:0005524">
    <property type="term" value="F:ATP binding"/>
    <property type="evidence" value="ECO:0007669"/>
    <property type="project" value="UniProtKB-KW"/>
</dbReference>
<dbReference type="GO" id="GO:0003677">
    <property type="term" value="F:DNA binding"/>
    <property type="evidence" value="ECO:0007669"/>
    <property type="project" value="UniProtKB-KW"/>
</dbReference>
<dbReference type="GO" id="GO:0008270">
    <property type="term" value="F:zinc ion binding"/>
    <property type="evidence" value="ECO:0007669"/>
    <property type="project" value="UniProtKB-UniRule"/>
</dbReference>
<dbReference type="GO" id="GO:0045892">
    <property type="term" value="P:negative regulation of DNA-templated transcription"/>
    <property type="evidence" value="ECO:0007669"/>
    <property type="project" value="UniProtKB-UniRule"/>
</dbReference>
<dbReference type="HAMAP" id="MF_00440">
    <property type="entry name" value="NrdR"/>
    <property type="match status" value="1"/>
</dbReference>
<dbReference type="InterPro" id="IPR005144">
    <property type="entry name" value="ATP-cone_dom"/>
</dbReference>
<dbReference type="InterPro" id="IPR055173">
    <property type="entry name" value="NrdR-like_N"/>
</dbReference>
<dbReference type="InterPro" id="IPR003796">
    <property type="entry name" value="RNR_NrdR-like"/>
</dbReference>
<dbReference type="NCBIfam" id="TIGR00244">
    <property type="entry name" value="transcriptional regulator NrdR"/>
    <property type="match status" value="1"/>
</dbReference>
<dbReference type="PANTHER" id="PTHR30455">
    <property type="entry name" value="TRANSCRIPTIONAL REPRESSOR NRDR"/>
    <property type="match status" value="1"/>
</dbReference>
<dbReference type="PANTHER" id="PTHR30455:SF2">
    <property type="entry name" value="TRANSCRIPTIONAL REPRESSOR NRDR"/>
    <property type="match status" value="1"/>
</dbReference>
<dbReference type="Pfam" id="PF03477">
    <property type="entry name" value="ATP-cone"/>
    <property type="match status" value="1"/>
</dbReference>
<dbReference type="Pfam" id="PF22811">
    <property type="entry name" value="Zn_ribbon_NrdR"/>
    <property type="match status" value="1"/>
</dbReference>
<dbReference type="PROSITE" id="PS51161">
    <property type="entry name" value="ATP_CONE"/>
    <property type="match status" value="1"/>
</dbReference>